<gene>
    <name type="primary">MSC3</name>
    <name type="ordered locus">CAGL0C00671g</name>
</gene>
<proteinExistence type="inferred from homology"/>
<dbReference type="EMBL" id="CR380949">
    <property type="protein sequence ID" value="CAG58115.1"/>
    <property type="molecule type" value="Genomic_DNA"/>
</dbReference>
<dbReference type="RefSeq" id="XP_445211.1">
    <property type="nucleotide sequence ID" value="XM_445211.1"/>
</dbReference>
<dbReference type="SMR" id="Q6FX33"/>
<dbReference type="FunCoup" id="Q6FX33">
    <property type="interactions" value="75"/>
</dbReference>
<dbReference type="EnsemblFungi" id="CAGL0C00671g-T">
    <property type="protein sequence ID" value="CAGL0C00671g-T-p1"/>
    <property type="gene ID" value="CAGL0C00671g"/>
</dbReference>
<dbReference type="KEGG" id="cgr:2886905"/>
<dbReference type="CGD" id="CAL0127198">
    <property type="gene designation" value="CAGL0C00671g"/>
</dbReference>
<dbReference type="VEuPathDB" id="FungiDB:CAGL0C00671g"/>
<dbReference type="eggNOG" id="ENOG502RZHH">
    <property type="taxonomic scope" value="Eukaryota"/>
</dbReference>
<dbReference type="HOGENOM" id="CLU_340389_0_0_1"/>
<dbReference type="InParanoid" id="Q6FX33"/>
<dbReference type="Proteomes" id="UP000002428">
    <property type="component" value="Chromosome C"/>
</dbReference>
<dbReference type="GO" id="GO:0005886">
    <property type="term" value="C:plasma membrane"/>
    <property type="evidence" value="ECO:0007669"/>
    <property type="project" value="UniProtKB-SubCell"/>
</dbReference>
<dbReference type="GO" id="GO:0006310">
    <property type="term" value="P:DNA recombination"/>
    <property type="evidence" value="ECO:0007669"/>
    <property type="project" value="UniProtKB-KW"/>
</dbReference>
<dbReference type="GO" id="GO:0051321">
    <property type="term" value="P:meiotic cell cycle"/>
    <property type="evidence" value="ECO:0007669"/>
    <property type="project" value="UniProtKB-KW"/>
</dbReference>
<evidence type="ECO:0000250" key="1"/>
<evidence type="ECO:0000256" key="2">
    <source>
        <dbReference type="SAM" id="MobiDB-lite"/>
    </source>
</evidence>
<protein>
    <recommendedName>
        <fullName>Meiotic sister-chromatid recombination protein 3</fullName>
    </recommendedName>
</protein>
<sequence length="834" mass="89322">MGFLTKKERRVPDLSRYDYHYQNKPAVDSSKYYVPREYGGKRLSASAAAAAIYTNPNPNATGVSRSYSLMHSYNPAAARQPPAGRTYSLRSDRASSITSNSRRPAAGKAQVRRASTQQRRASVDQELGTGVNQPRTNSITVTTTKVRDPQGRTKSITKKTVRRINGYEVVETTTTTTTTEPLPTQNGKMPANMDLVSVEDGTDVEEEHDDGLPSPQAHFDEFSGDFVAEDDLSSEVLQHQQQQYIEDIVEEETEEEEDPGHTGTKRLPGEFNEPPRTNIAARRSNSLTGSLSSLGAKKTISEEVPLDQTSSVSKFSDAMEYIPPTTTTAKPKKSNLRNSMTARKLAQPQQGQNQRRTVSFTQGSIDHMNTTKKKKQPLTEQEMYLQALEVAKKKVYKTDDPAVVGNAANNSNKRVSTMGKRMTLRDSAPVPRSSSMMMNKFHDQGSARNNVAQQQTDVRRSKSMTGSAVPPQAGKKKLTDEEMYEKALEIAQKRYNDLVSADTAAVGAASVGAASAATPVASTAPKKSGFKQRFTKTFHTDDNKSKINNASAGGMVSGGAAAVEVAPGVTTTDPVVAENVNEASQIERMDNVEMASASAANEYAAPAAGFRATSAPLYQSRSAEPVGAYAAPDAPISKYKIVDKILKFAQSNYGYQAHDDEEAAMVAPASAPATAPAGTSMAQPVVVPVERRSSVGKHGNTTTLPVETPLADNASESSFRHTHPQEQPVPLSQIEKKISVVSETGSRKAAPAATAAKTPATAPAMSYGTAKTPFIDIDAVDALSGHVPFEEATRHASVATAATAATGGTTGTAATTGTGTSKKKSFLRKLFGRK</sequence>
<name>MSC3_CANGA</name>
<feature type="chain" id="PRO_0000096593" description="Meiotic sister-chromatid recombination protein 3">
    <location>
        <begin position="1"/>
        <end position="834"/>
    </location>
</feature>
<feature type="region of interest" description="Disordered" evidence="2">
    <location>
        <begin position="75"/>
        <end position="136"/>
    </location>
</feature>
<feature type="region of interest" description="Disordered" evidence="2">
    <location>
        <begin position="251"/>
        <end position="291"/>
    </location>
</feature>
<feature type="region of interest" description="Disordered" evidence="2">
    <location>
        <begin position="343"/>
        <end position="378"/>
    </location>
</feature>
<feature type="region of interest" description="Disordered" evidence="2">
    <location>
        <begin position="458"/>
        <end position="479"/>
    </location>
</feature>
<feature type="compositionally biased region" description="Polar residues" evidence="2">
    <location>
        <begin position="343"/>
        <end position="368"/>
    </location>
</feature>
<keyword id="KW-1003">Cell membrane</keyword>
<keyword id="KW-0233">DNA recombination</keyword>
<keyword id="KW-0469">Meiosis</keyword>
<keyword id="KW-0472">Membrane</keyword>
<keyword id="KW-1185">Reference proteome</keyword>
<comment type="function">
    <text evidence="1">May be involved in the control of meiotic sister-chromatid recombination.</text>
</comment>
<comment type="subcellular location">
    <subcellularLocation>
        <location>Cell membrane</location>
        <topology>Peripheral membrane protein</topology>
    </subcellularLocation>
    <text evidence="1">Cell periphery.</text>
</comment>
<reference key="1">
    <citation type="journal article" date="2004" name="Nature">
        <title>Genome evolution in yeasts.</title>
        <authorList>
            <person name="Dujon B."/>
            <person name="Sherman D."/>
            <person name="Fischer G."/>
            <person name="Durrens P."/>
            <person name="Casaregola S."/>
            <person name="Lafontaine I."/>
            <person name="de Montigny J."/>
            <person name="Marck C."/>
            <person name="Neuveglise C."/>
            <person name="Talla E."/>
            <person name="Goffard N."/>
            <person name="Frangeul L."/>
            <person name="Aigle M."/>
            <person name="Anthouard V."/>
            <person name="Babour A."/>
            <person name="Barbe V."/>
            <person name="Barnay S."/>
            <person name="Blanchin S."/>
            <person name="Beckerich J.-M."/>
            <person name="Beyne E."/>
            <person name="Bleykasten C."/>
            <person name="Boisrame A."/>
            <person name="Boyer J."/>
            <person name="Cattolico L."/>
            <person name="Confanioleri F."/>
            <person name="de Daruvar A."/>
            <person name="Despons L."/>
            <person name="Fabre E."/>
            <person name="Fairhead C."/>
            <person name="Ferry-Dumazet H."/>
            <person name="Groppi A."/>
            <person name="Hantraye F."/>
            <person name="Hennequin C."/>
            <person name="Jauniaux N."/>
            <person name="Joyet P."/>
            <person name="Kachouri R."/>
            <person name="Kerrest A."/>
            <person name="Koszul R."/>
            <person name="Lemaire M."/>
            <person name="Lesur I."/>
            <person name="Ma L."/>
            <person name="Muller H."/>
            <person name="Nicaud J.-M."/>
            <person name="Nikolski M."/>
            <person name="Oztas S."/>
            <person name="Ozier-Kalogeropoulos O."/>
            <person name="Pellenz S."/>
            <person name="Potier S."/>
            <person name="Richard G.-F."/>
            <person name="Straub M.-L."/>
            <person name="Suleau A."/>
            <person name="Swennen D."/>
            <person name="Tekaia F."/>
            <person name="Wesolowski-Louvel M."/>
            <person name="Westhof E."/>
            <person name="Wirth B."/>
            <person name="Zeniou-Meyer M."/>
            <person name="Zivanovic Y."/>
            <person name="Bolotin-Fukuhara M."/>
            <person name="Thierry A."/>
            <person name="Bouchier C."/>
            <person name="Caudron B."/>
            <person name="Scarpelli C."/>
            <person name="Gaillardin C."/>
            <person name="Weissenbach J."/>
            <person name="Wincker P."/>
            <person name="Souciet J.-L."/>
        </authorList>
    </citation>
    <scope>NUCLEOTIDE SEQUENCE [LARGE SCALE GENOMIC DNA]</scope>
    <source>
        <strain>ATCC 2001 / BCRC 20586 / JCM 3761 / NBRC 0622 / NRRL Y-65 / CBS 138</strain>
    </source>
</reference>
<organism>
    <name type="scientific">Candida glabrata (strain ATCC 2001 / BCRC 20586 / JCM 3761 / NBRC 0622 / NRRL Y-65 / CBS 138)</name>
    <name type="common">Yeast</name>
    <name type="synonym">Nakaseomyces glabratus</name>
    <dbReference type="NCBI Taxonomy" id="284593"/>
    <lineage>
        <taxon>Eukaryota</taxon>
        <taxon>Fungi</taxon>
        <taxon>Dikarya</taxon>
        <taxon>Ascomycota</taxon>
        <taxon>Saccharomycotina</taxon>
        <taxon>Saccharomycetes</taxon>
        <taxon>Saccharomycetales</taxon>
        <taxon>Saccharomycetaceae</taxon>
        <taxon>Nakaseomyces</taxon>
    </lineage>
</organism>
<accession>Q6FX33</accession>